<evidence type="ECO:0000255" key="1">
    <source>
        <dbReference type="HAMAP-Rule" id="MF_01113"/>
    </source>
</evidence>
<feature type="chain" id="PRO_1000137148" description="DNA polymerase IV">
    <location>
        <begin position="1"/>
        <end position="364"/>
    </location>
</feature>
<feature type="domain" description="UmuC" evidence="1">
    <location>
        <begin position="7"/>
        <end position="187"/>
    </location>
</feature>
<feature type="active site" evidence="1">
    <location>
        <position position="106"/>
    </location>
</feature>
<feature type="binding site" evidence="1">
    <location>
        <position position="11"/>
    </location>
    <ligand>
        <name>Mg(2+)</name>
        <dbReference type="ChEBI" id="CHEBI:18420"/>
    </ligand>
</feature>
<feature type="binding site" evidence="1">
    <location>
        <position position="105"/>
    </location>
    <ligand>
        <name>Mg(2+)</name>
        <dbReference type="ChEBI" id="CHEBI:18420"/>
    </ligand>
</feature>
<feature type="site" description="Substrate discrimination" evidence="1">
    <location>
        <position position="16"/>
    </location>
</feature>
<sequence length="364" mass="40489">MTRLRKIIHVDMDAFYASVEQRDDPSLRGKPVVVAWRGARSVVCAASYEARVFGVRSAMPAVRAERLCPDAIFVPPDFARYKAVSQQVRAIFLRHTDLVEPLSLDEAYLDVSEPKSGIELATDIARTIRAQIREETNLTASAGIAPNKFLAKIASDWRKPDGQFVIPPQRVDAFLAPLPVNRVPGVGKVMEGKLAARGIVTCGDLRQWALIDLEEAFGSFGRSLYNRARGIDERPVEPDQQVQSISSEDTFAEDLLLEDLTEAIVQLAGKTWNATRKTERIGHTVVLKLKTAQFRILTRSFTPERPPESMEELRDIALALRARVDLPAETRYRLVGVGLGGFREKEAVVQGELFEQGPNDSPRS</sequence>
<proteinExistence type="inferred from homology"/>
<comment type="function">
    <text evidence="1">Poorly processive, error-prone DNA polymerase involved in untargeted mutagenesis. Copies undamaged DNA at stalled replication forks, which arise in vivo from mismatched or misaligned primer ends. These misaligned primers can be extended by PolIV. Exhibits no 3'-5' exonuclease (proofreading) activity. May be involved in translesional synthesis, in conjunction with the beta clamp from PolIII.</text>
</comment>
<comment type="catalytic activity">
    <reaction evidence="1">
        <text>DNA(n) + a 2'-deoxyribonucleoside 5'-triphosphate = DNA(n+1) + diphosphate</text>
        <dbReference type="Rhea" id="RHEA:22508"/>
        <dbReference type="Rhea" id="RHEA-COMP:17339"/>
        <dbReference type="Rhea" id="RHEA-COMP:17340"/>
        <dbReference type="ChEBI" id="CHEBI:33019"/>
        <dbReference type="ChEBI" id="CHEBI:61560"/>
        <dbReference type="ChEBI" id="CHEBI:173112"/>
        <dbReference type="EC" id="2.7.7.7"/>
    </reaction>
</comment>
<comment type="cofactor">
    <cofactor evidence="1">
        <name>Mg(2+)</name>
        <dbReference type="ChEBI" id="CHEBI:18420"/>
    </cofactor>
    <text evidence="1">Binds 2 magnesium ions per subunit.</text>
</comment>
<comment type="subunit">
    <text evidence="1">Monomer.</text>
</comment>
<comment type="subcellular location">
    <subcellularLocation>
        <location evidence="1">Cytoplasm</location>
    </subcellularLocation>
</comment>
<comment type="similarity">
    <text evidence="1">Belongs to the DNA polymerase type-Y family.</text>
</comment>
<reference key="1">
    <citation type="journal article" date="2008" name="Genome Biol.">
        <title>The complete genome, comparative and functional analysis of Stenotrophomonas maltophilia reveals an organism heavily shielded by drug resistance determinants.</title>
        <authorList>
            <person name="Crossman L.C."/>
            <person name="Gould V.C."/>
            <person name="Dow J.M."/>
            <person name="Vernikos G.S."/>
            <person name="Okazaki A."/>
            <person name="Sebaihia M."/>
            <person name="Saunders D."/>
            <person name="Arrowsmith C."/>
            <person name="Carver T."/>
            <person name="Peters N."/>
            <person name="Adlem E."/>
            <person name="Kerhornou A."/>
            <person name="Lord A."/>
            <person name="Murphy L."/>
            <person name="Seeger K."/>
            <person name="Squares R."/>
            <person name="Rutter S."/>
            <person name="Quail M.A."/>
            <person name="Rajandream M.A."/>
            <person name="Harris D."/>
            <person name="Churcher C."/>
            <person name="Bentley S.D."/>
            <person name="Parkhill J."/>
            <person name="Thomson N.R."/>
            <person name="Avison M.B."/>
        </authorList>
    </citation>
    <scope>NUCLEOTIDE SEQUENCE [LARGE SCALE GENOMIC DNA]</scope>
    <source>
        <strain>K279a</strain>
    </source>
</reference>
<name>DPO4_STRMK</name>
<keyword id="KW-0963">Cytoplasm</keyword>
<keyword id="KW-0227">DNA damage</keyword>
<keyword id="KW-0234">DNA repair</keyword>
<keyword id="KW-0235">DNA replication</keyword>
<keyword id="KW-0238">DNA-binding</keyword>
<keyword id="KW-0239">DNA-directed DNA polymerase</keyword>
<keyword id="KW-0460">Magnesium</keyword>
<keyword id="KW-0479">Metal-binding</keyword>
<keyword id="KW-0515">Mutator protein</keyword>
<keyword id="KW-0548">Nucleotidyltransferase</keyword>
<keyword id="KW-1185">Reference proteome</keyword>
<keyword id="KW-0808">Transferase</keyword>
<accession>B2FLR2</accession>
<protein>
    <recommendedName>
        <fullName evidence="1">DNA polymerase IV</fullName>
        <shortName evidence="1">Pol IV</shortName>
        <ecNumber evidence="1">2.7.7.7</ecNumber>
    </recommendedName>
</protein>
<gene>
    <name evidence="1" type="primary">dinB</name>
    <name type="ordered locus">Smlt0578</name>
</gene>
<organism>
    <name type="scientific">Stenotrophomonas maltophilia (strain K279a)</name>
    <dbReference type="NCBI Taxonomy" id="522373"/>
    <lineage>
        <taxon>Bacteria</taxon>
        <taxon>Pseudomonadati</taxon>
        <taxon>Pseudomonadota</taxon>
        <taxon>Gammaproteobacteria</taxon>
        <taxon>Lysobacterales</taxon>
        <taxon>Lysobacteraceae</taxon>
        <taxon>Stenotrophomonas</taxon>
        <taxon>Stenotrophomonas maltophilia group</taxon>
    </lineage>
</organism>
<dbReference type="EC" id="2.7.7.7" evidence="1"/>
<dbReference type="EMBL" id="AM743169">
    <property type="protein sequence ID" value="CAQ44166.1"/>
    <property type="molecule type" value="Genomic_DNA"/>
</dbReference>
<dbReference type="RefSeq" id="WP_012479032.1">
    <property type="nucleotide sequence ID" value="NC_010943.1"/>
</dbReference>
<dbReference type="SMR" id="B2FLR2"/>
<dbReference type="EnsemblBacteria" id="CAQ44166">
    <property type="protein sequence ID" value="CAQ44166"/>
    <property type="gene ID" value="Smlt0578"/>
</dbReference>
<dbReference type="KEGG" id="sml:Smlt0578"/>
<dbReference type="PATRIC" id="fig|522373.3.peg.547"/>
<dbReference type="eggNOG" id="COG0389">
    <property type="taxonomic scope" value="Bacteria"/>
</dbReference>
<dbReference type="HOGENOM" id="CLU_012348_1_2_6"/>
<dbReference type="Proteomes" id="UP000008840">
    <property type="component" value="Chromosome"/>
</dbReference>
<dbReference type="GO" id="GO:0005829">
    <property type="term" value="C:cytosol"/>
    <property type="evidence" value="ECO:0007669"/>
    <property type="project" value="TreeGrafter"/>
</dbReference>
<dbReference type="GO" id="GO:0003684">
    <property type="term" value="F:damaged DNA binding"/>
    <property type="evidence" value="ECO:0007669"/>
    <property type="project" value="InterPro"/>
</dbReference>
<dbReference type="GO" id="GO:0003887">
    <property type="term" value="F:DNA-directed DNA polymerase activity"/>
    <property type="evidence" value="ECO:0007669"/>
    <property type="project" value="UniProtKB-UniRule"/>
</dbReference>
<dbReference type="GO" id="GO:0000287">
    <property type="term" value="F:magnesium ion binding"/>
    <property type="evidence" value="ECO:0007669"/>
    <property type="project" value="UniProtKB-UniRule"/>
</dbReference>
<dbReference type="GO" id="GO:0006261">
    <property type="term" value="P:DNA-templated DNA replication"/>
    <property type="evidence" value="ECO:0007669"/>
    <property type="project" value="UniProtKB-UniRule"/>
</dbReference>
<dbReference type="GO" id="GO:0042276">
    <property type="term" value="P:error-prone translesion synthesis"/>
    <property type="evidence" value="ECO:0007669"/>
    <property type="project" value="TreeGrafter"/>
</dbReference>
<dbReference type="GO" id="GO:0009432">
    <property type="term" value="P:SOS response"/>
    <property type="evidence" value="ECO:0007669"/>
    <property type="project" value="TreeGrafter"/>
</dbReference>
<dbReference type="CDD" id="cd03586">
    <property type="entry name" value="PolY_Pol_IV_kappa"/>
    <property type="match status" value="1"/>
</dbReference>
<dbReference type="FunFam" id="1.10.150.20:FF:000019">
    <property type="entry name" value="DNA polymerase IV"/>
    <property type="match status" value="1"/>
</dbReference>
<dbReference type="FunFam" id="3.40.1170.60:FF:000001">
    <property type="entry name" value="DNA polymerase IV"/>
    <property type="match status" value="1"/>
</dbReference>
<dbReference type="Gene3D" id="3.30.70.270">
    <property type="match status" value="1"/>
</dbReference>
<dbReference type="Gene3D" id="3.40.1170.60">
    <property type="match status" value="1"/>
</dbReference>
<dbReference type="Gene3D" id="1.10.150.20">
    <property type="entry name" value="5' to 3' exonuclease, C-terminal subdomain"/>
    <property type="match status" value="1"/>
</dbReference>
<dbReference type="Gene3D" id="3.30.1490.100">
    <property type="entry name" value="DNA polymerase, Y-family, little finger domain"/>
    <property type="match status" value="1"/>
</dbReference>
<dbReference type="HAMAP" id="MF_01113">
    <property type="entry name" value="DNApol_IV"/>
    <property type="match status" value="1"/>
</dbReference>
<dbReference type="InterPro" id="IPR043502">
    <property type="entry name" value="DNA/RNA_pol_sf"/>
</dbReference>
<dbReference type="InterPro" id="IPR036775">
    <property type="entry name" value="DNA_pol_Y-fam_lit_finger_sf"/>
</dbReference>
<dbReference type="InterPro" id="IPR017961">
    <property type="entry name" value="DNA_pol_Y-fam_little_finger"/>
</dbReference>
<dbReference type="InterPro" id="IPR050116">
    <property type="entry name" value="DNA_polymerase-Y"/>
</dbReference>
<dbReference type="InterPro" id="IPR022880">
    <property type="entry name" value="DNApol_IV"/>
</dbReference>
<dbReference type="InterPro" id="IPR053848">
    <property type="entry name" value="IMS_HHH_1"/>
</dbReference>
<dbReference type="InterPro" id="IPR043128">
    <property type="entry name" value="Rev_trsase/Diguanyl_cyclase"/>
</dbReference>
<dbReference type="InterPro" id="IPR001126">
    <property type="entry name" value="UmuC"/>
</dbReference>
<dbReference type="NCBIfam" id="NF002677">
    <property type="entry name" value="PRK02406.1"/>
    <property type="match status" value="1"/>
</dbReference>
<dbReference type="PANTHER" id="PTHR11076:SF33">
    <property type="entry name" value="DNA POLYMERASE KAPPA"/>
    <property type="match status" value="1"/>
</dbReference>
<dbReference type="PANTHER" id="PTHR11076">
    <property type="entry name" value="DNA REPAIR POLYMERASE UMUC / TRANSFERASE FAMILY MEMBER"/>
    <property type="match status" value="1"/>
</dbReference>
<dbReference type="Pfam" id="PF00817">
    <property type="entry name" value="IMS"/>
    <property type="match status" value="1"/>
</dbReference>
<dbReference type="Pfam" id="PF11799">
    <property type="entry name" value="IMS_C"/>
    <property type="match status" value="1"/>
</dbReference>
<dbReference type="Pfam" id="PF21999">
    <property type="entry name" value="IMS_HHH_1"/>
    <property type="match status" value="1"/>
</dbReference>
<dbReference type="SUPFAM" id="SSF56672">
    <property type="entry name" value="DNA/RNA polymerases"/>
    <property type="match status" value="1"/>
</dbReference>
<dbReference type="SUPFAM" id="SSF100879">
    <property type="entry name" value="Lesion bypass DNA polymerase (Y-family), little finger domain"/>
    <property type="match status" value="1"/>
</dbReference>
<dbReference type="PROSITE" id="PS50173">
    <property type="entry name" value="UMUC"/>
    <property type="match status" value="1"/>
</dbReference>